<evidence type="ECO:0000255" key="1">
    <source>
        <dbReference type="HAMAP-Rule" id="MF_00185"/>
    </source>
</evidence>
<evidence type="ECO:0000305" key="2"/>
<reference key="1">
    <citation type="journal article" date="2001" name="Science">
        <title>The genome of the natural genetic engineer Agrobacterium tumefaciens C58.</title>
        <authorList>
            <person name="Wood D.W."/>
            <person name="Setubal J.C."/>
            <person name="Kaul R."/>
            <person name="Monks D.E."/>
            <person name="Kitajima J.P."/>
            <person name="Okura V.K."/>
            <person name="Zhou Y."/>
            <person name="Chen L."/>
            <person name="Wood G.E."/>
            <person name="Almeida N.F. Jr."/>
            <person name="Woo L."/>
            <person name="Chen Y."/>
            <person name="Paulsen I.T."/>
            <person name="Eisen J.A."/>
            <person name="Karp P.D."/>
            <person name="Bovee D. Sr."/>
            <person name="Chapman P."/>
            <person name="Clendenning J."/>
            <person name="Deatherage G."/>
            <person name="Gillet W."/>
            <person name="Grant C."/>
            <person name="Kutyavin T."/>
            <person name="Levy R."/>
            <person name="Li M.-J."/>
            <person name="McClelland E."/>
            <person name="Palmieri A."/>
            <person name="Raymond C."/>
            <person name="Rouse G."/>
            <person name="Saenphimmachak C."/>
            <person name="Wu Z."/>
            <person name="Romero P."/>
            <person name="Gordon D."/>
            <person name="Zhang S."/>
            <person name="Yoo H."/>
            <person name="Tao Y."/>
            <person name="Biddle P."/>
            <person name="Jung M."/>
            <person name="Krespan W."/>
            <person name="Perry M."/>
            <person name="Gordon-Kamm B."/>
            <person name="Liao L."/>
            <person name="Kim S."/>
            <person name="Hendrick C."/>
            <person name="Zhao Z.-Y."/>
            <person name="Dolan M."/>
            <person name="Chumley F."/>
            <person name="Tingey S.V."/>
            <person name="Tomb J.-F."/>
            <person name="Gordon M.P."/>
            <person name="Olson M.V."/>
            <person name="Nester E.W."/>
        </authorList>
    </citation>
    <scope>NUCLEOTIDE SEQUENCE [LARGE SCALE GENOMIC DNA]</scope>
    <source>
        <strain>C58 / ATCC 33970</strain>
    </source>
</reference>
<reference key="2">
    <citation type="journal article" date="2001" name="Science">
        <title>Genome sequence of the plant pathogen and biotechnology agent Agrobacterium tumefaciens C58.</title>
        <authorList>
            <person name="Goodner B."/>
            <person name="Hinkle G."/>
            <person name="Gattung S."/>
            <person name="Miller N."/>
            <person name="Blanchard M."/>
            <person name="Qurollo B."/>
            <person name="Goldman B.S."/>
            <person name="Cao Y."/>
            <person name="Askenazi M."/>
            <person name="Halling C."/>
            <person name="Mullin L."/>
            <person name="Houmiel K."/>
            <person name="Gordon J."/>
            <person name="Vaudin M."/>
            <person name="Iartchouk O."/>
            <person name="Epp A."/>
            <person name="Liu F."/>
            <person name="Wollam C."/>
            <person name="Allinger M."/>
            <person name="Doughty D."/>
            <person name="Scott C."/>
            <person name="Lappas C."/>
            <person name="Markelz B."/>
            <person name="Flanagan C."/>
            <person name="Crowell C."/>
            <person name="Gurson J."/>
            <person name="Lomo C."/>
            <person name="Sear C."/>
            <person name="Strub G."/>
            <person name="Cielo C."/>
            <person name="Slater S."/>
        </authorList>
    </citation>
    <scope>NUCLEOTIDE SEQUENCE [LARGE SCALE GENOMIC DNA]</scope>
    <source>
        <strain>C58 / ATCC 33970</strain>
    </source>
</reference>
<proteinExistence type="inferred from homology"/>
<gene>
    <name evidence="1" type="primary">miaA</name>
    <name type="ordered locus">Atu2039</name>
    <name type="ORF">AGR_C_3695</name>
</gene>
<name>MIAA_AGRFC</name>
<keyword id="KW-0067">ATP-binding</keyword>
<keyword id="KW-0460">Magnesium</keyword>
<keyword id="KW-0547">Nucleotide-binding</keyword>
<keyword id="KW-1185">Reference proteome</keyword>
<keyword id="KW-0808">Transferase</keyword>
<keyword id="KW-0819">tRNA processing</keyword>
<keyword id="KW-0843">Virulence</keyword>
<protein>
    <recommendedName>
        <fullName evidence="1">tRNA dimethylallyltransferase</fullName>
        <ecNumber evidence="1">2.5.1.75</ecNumber>
    </recommendedName>
    <alternativeName>
        <fullName evidence="1">Dimethylallyl diphosphate:tRNA dimethylallyltransferase</fullName>
        <shortName evidence="1">DMAPP:tRNA dimethylallyltransferase</shortName>
        <shortName evidence="1">DMATase</shortName>
    </alternativeName>
    <alternativeName>
        <fullName evidence="1">Isopentenyl-diphosphate:tRNA isopentenyltransferase</fullName>
        <shortName evidence="1">IPP transferase</shortName>
        <shortName evidence="1">IPPT</shortName>
        <shortName evidence="1">IPTase</shortName>
    </alternativeName>
</protein>
<feature type="chain" id="PRO_0000163864" description="tRNA dimethylallyltransferase">
    <location>
        <begin position="1"/>
        <end position="298"/>
    </location>
</feature>
<feature type="region of interest" description="Interaction with substrate tRNA" evidence="1">
    <location>
        <begin position="41"/>
        <end position="44"/>
    </location>
</feature>
<feature type="region of interest" description="Interaction with substrate tRNA" evidence="1">
    <location>
        <begin position="165"/>
        <end position="169"/>
    </location>
</feature>
<feature type="binding site" evidence="1">
    <location>
        <begin position="16"/>
        <end position="23"/>
    </location>
    <ligand>
        <name>ATP</name>
        <dbReference type="ChEBI" id="CHEBI:30616"/>
    </ligand>
</feature>
<feature type="binding site" evidence="1">
    <location>
        <begin position="18"/>
        <end position="23"/>
    </location>
    <ligand>
        <name>substrate</name>
    </ligand>
</feature>
<feature type="site" description="Interaction with substrate tRNA" evidence="1">
    <location>
        <position position="107"/>
    </location>
</feature>
<feature type="site" description="Interaction with substrate tRNA" evidence="1">
    <location>
        <position position="129"/>
    </location>
</feature>
<dbReference type="EC" id="2.5.1.75" evidence="1"/>
<dbReference type="EMBL" id="AE007869">
    <property type="protein sequence ID" value="AAK87792.2"/>
    <property type="molecule type" value="Genomic_DNA"/>
</dbReference>
<dbReference type="PIR" id="AI2826">
    <property type="entry name" value="AI2826"/>
</dbReference>
<dbReference type="PIR" id="G97604">
    <property type="entry name" value="G97604"/>
</dbReference>
<dbReference type="RefSeq" id="NP_355007.2">
    <property type="nucleotide sequence ID" value="NC_003062.2"/>
</dbReference>
<dbReference type="RefSeq" id="WP_010972016.1">
    <property type="nucleotide sequence ID" value="NC_003062.2"/>
</dbReference>
<dbReference type="SMR" id="P0A3Q5"/>
<dbReference type="STRING" id="176299.Atu2039"/>
<dbReference type="DNASU" id="1134077"/>
<dbReference type="EnsemblBacteria" id="AAK87792">
    <property type="protein sequence ID" value="AAK87792"/>
    <property type="gene ID" value="Atu2039"/>
</dbReference>
<dbReference type="GeneID" id="1134077"/>
<dbReference type="KEGG" id="atu:Atu2039"/>
<dbReference type="PATRIC" id="fig|176299.10.peg.2050"/>
<dbReference type="eggNOG" id="COG0324">
    <property type="taxonomic scope" value="Bacteria"/>
</dbReference>
<dbReference type="HOGENOM" id="CLU_032616_0_1_5"/>
<dbReference type="OrthoDB" id="9776390at2"/>
<dbReference type="PhylomeDB" id="P0A3Q5"/>
<dbReference type="BioCyc" id="AGRO:ATU2039-MONOMER"/>
<dbReference type="Proteomes" id="UP000000813">
    <property type="component" value="Chromosome circular"/>
</dbReference>
<dbReference type="GO" id="GO:0005524">
    <property type="term" value="F:ATP binding"/>
    <property type="evidence" value="ECO:0007669"/>
    <property type="project" value="UniProtKB-UniRule"/>
</dbReference>
<dbReference type="GO" id="GO:0052381">
    <property type="term" value="F:tRNA dimethylallyltransferase activity"/>
    <property type="evidence" value="ECO:0007669"/>
    <property type="project" value="UniProtKB-UniRule"/>
</dbReference>
<dbReference type="GO" id="GO:0006400">
    <property type="term" value="P:tRNA modification"/>
    <property type="evidence" value="ECO:0007669"/>
    <property type="project" value="TreeGrafter"/>
</dbReference>
<dbReference type="Gene3D" id="1.10.20.140">
    <property type="match status" value="1"/>
</dbReference>
<dbReference type="Gene3D" id="3.40.50.300">
    <property type="entry name" value="P-loop containing nucleotide triphosphate hydrolases"/>
    <property type="match status" value="1"/>
</dbReference>
<dbReference type="HAMAP" id="MF_00185">
    <property type="entry name" value="IPP_trans"/>
    <property type="match status" value="1"/>
</dbReference>
<dbReference type="InterPro" id="IPR039657">
    <property type="entry name" value="Dimethylallyltransferase"/>
</dbReference>
<dbReference type="InterPro" id="IPR018022">
    <property type="entry name" value="IPT"/>
</dbReference>
<dbReference type="InterPro" id="IPR027417">
    <property type="entry name" value="P-loop_NTPase"/>
</dbReference>
<dbReference type="NCBIfam" id="TIGR00174">
    <property type="entry name" value="miaA"/>
    <property type="match status" value="1"/>
</dbReference>
<dbReference type="PANTHER" id="PTHR11088">
    <property type="entry name" value="TRNA DIMETHYLALLYLTRANSFERASE"/>
    <property type="match status" value="1"/>
</dbReference>
<dbReference type="PANTHER" id="PTHR11088:SF60">
    <property type="entry name" value="TRNA DIMETHYLALLYLTRANSFERASE"/>
    <property type="match status" value="1"/>
</dbReference>
<dbReference type="Pfam" id="PF01715">
    <property type="entry name" value="IPPT"/>
    <property type="match status" value="1"/>
</dbReference>
<dbReference type="SUPFAM" id="SSF52540">
    <property type="entry name" value="P-loop containing nucleoside triphosphate hydrolases"/>
    <property type="match status" value="2"/>
</dbReference>
<organism>
    <name type="scientific">Agrobacterium fabrum (strain C58 / ATCC 33970)</name>
    <name type="common">Agrobacterium tumefaciens (strain C58)</name>
    <dbReference type="NCBI Taxonomy" id="176299"/>
    <lineage>
        <taxon>Bacteria</taxon>
        <taxon>Pseudomonadati</taxon>
        <taxon>Pseudomonadota</taxon>
        <taxon>Alphaproteobacteria</taxon>
        <taxon>Hyphomicrobiales</taxon>
        <taxon>Rhizobiaceae</taxon>
        <taxon>Rhizobium/Agrobacterium group</taxon>
        <taxon>Agrobacterium</taxon>
        <taxon>Agrobacterium tumefaciens complex</taxon>
    </lineage>
</organism>
<accession>P0A3Q5</accession>
<accession>P38436</accession>
<comment type="function">
    <text evidence="1">Catalyzes the transfer of a dimethylallyl group onto the adenine at position 37 in tRNAs that read codons beginning with uridine, leading to the formation of N6-(dimethylallyl)adenosine (i(6)A).</text>
</comment>
<comment type="catalytic activity">
    <reaction evidence="1">
        <text>adenosine(37) in tRNA + dimethylallyl diphosphate = N(6)-dimethylallyladenosine(37) in tRNA + diphosphate</text>
        <dbReference type="Rhea" id="RHEA:26482"/>
        <dbReference type="Rhea" id="RHEA-COMP:10162"/>
        <dbReference type="Rhea" id="RHEA-COMP:10375"/>
        <dbReference type="ChEBI" id="CHEBI:33019"/>
        <dbReference type="ChEBI" id="CHEBI:57623"/>
        <dbReference type="ChEBI" id="CHEBI:74411"/>
        <dbReference type="ChEBI" id="CHEBI:74415"/>
        <dbReference type="EC" id="2.5.1.75"/>
    </reaction>
</comment>
<comment type="cofactor">
    <cofactor evidence="1">
        <name>Mg(2+)</name>
        <dbReference type="ChEBI" id="CHEBI:18420"/>
    </cofactor>
</comment>
<comment type="subunit">
    <text evidence="1">Monomer.</text>
</comment>
<comment type="similarity">
    <text evidence="1">Belongs to the IPP transferase family.</text>
</comment>
<comment type="caution">
    <text evidence="2">It is uncertain whether Met-1 or Met-2 is the initiator.</text>
</comment>
<sequence length="298" mass="32660">MMKNLDQNFDAILITGPTASGKSALALRLARERNGVVINADSMQVYDTLRVLTARPSDHEMEGVPHRLYGHVPAGSAYSTGEWLRDISGLLSDLRGEGRFPVIVGGTGLYFKALTGGLSDMPAIPDDLREGLRARLIEEGAAKLHAELVSRDPSMAQMLQPGDGQRIVRALEVLEATGKSIRDFQRASGPMIIDPERAQKFIVLPERPVLHDRINRRFEAMMDSGAVEEVQALLALNLAPDATAMKAIGVAQIADMLTGRMGAAEVIEKSAAATRQYAKRQMTWFRNQMGDDWTRIQP</sequence>